<sequence>MEWYPEAAANAERYTQIVWYK</sequence>
<proteinExistence type="evidence at protein level"/>
<feature type="chain" id="PRO_0000417009" description="Helicopsin">
    <location>
        <begin position="1"/>
        <end position="21"/>
    </location>
</feature>
<feature type="non-consecutive residues" evidence="3">
    <location>
        <begin position="13"/>
        <end position="14"/>
    </location>
</feature>
<feature type="non-terminal residue">
    <location>
        <position position="1"/>
    </location>
</feature>
<feature type="non-terminal residue">
    <location>
        <position position="21"/>
    </location>
</feature>
<keyword id="KW-0903">Direct protein sequencing</keyword>
<keyword id="KW-1015">Disulfide bond</keyword>
<keyword id="KW-0528">Neurotoxin</keyword>
<keyword id="KW-0964">Secreted</keyword>
<keyword id="KW-0800">Toxin</keyword>
<comment type="function">
    <text evidence="2">Helicopsin exhibits robust neurotoxic activity as shown by immediate death (about 8 minutes) of mice due to respiratory paralysis.</text>
</comment>
<comment type="subcellular location">
    <subcellularLocation>
        <location evidence="2">Secreted</location>
    </subcellularLocation>
</comment>
<comment type="tissue specificity">
    <text evidence="2">Expressed by the salivary gland.</text>
</comment>
<comment type="PTM">
    <text evidence="1">Contains 8 disulfide bonds.</text>
</comment>
<comment type="toxic dose">
    <text evidence="2">LD(50) is 5.3 mg/kg by intraperitoneal injection into mice.</text>
</comment>
<comment type="miscellaneous">
    <text evidence="4">Negative results: has no hemorrhagic activity.</text>
</comment>
<comment type="similarity">
    <text evidence="3">Belongs to the CRISP family.</text>
</comment>
<accession>P0DJG8</accession>
<reference key="1">
    <citation type="journal article" date="2011" name="Arch. Toxicol.">
        <title>Characterization of toxins from the broad-banded water snake Helicops angulatus (Linnaeus, 1758): isolation of a cysteine-rich secretory protein, Helicopsin.</title>
        <authorList>
            <person name="Estrella A."/>
            <person name="Sanchez E.E."/>
            <person name="Galan J.A."/>
            <person name="Tao W.A."/>
            <person name="Guerrero B."/>
            <person name="Navarrete L.F."/>
            <person name="Rodriguez-Acosta A."/>
        </authorList>
    </citation>
    <scope>PROTEIN SEQUENCE</scope>
    <scope>IDENTIFICATION BY MASS SPECTROMETRY</scope>
    <scope>FUNCTION</scope>
    <scope>SUBCELLULAR LOCATION</scope>
    <scope>TISSUE SPECIFICITY</scope>
    <scope>TOXIC DOSE</scope>
    <source>
        <tissue>Saliva</tissue>
    </source>
</reference>
<evidence type="ECO:0000250" key="1"/>
<evidence type="ECO:0000269" key="2">
    <source>
    </source>
</evidence>
<evidence type="ECO:0000305" key="3"/>
<evidence type="ECO:0000305" key="4">
    <source>
    </source>
</evidence>
<protein>
    <recommendedName>
        <fullName>Helicopsin</fullName>
    </recommendedName>
</protein>
<dbReference type="GO" id="GO:0005576">
    <property type="term" value="C:extracellular region"/>
    <property type="evidence" value="ECO:0007669"/>
    <property type="project" value="UniProtKB-SubCell"/>
</dbReference>
<dbReference type="GO" id="GO:0090729">
    <property type="term" value="F:toxin activity"/>
    <property type="evidence" value="ECO:0007669"/>
    <property type="project" value="UniProtKB-KW"/>
</dbReference>
<organism>
    <name type="scientific">Helicops angulatus</name>
    <name type="common">South American water snake</name>
    <dbReference type="NCBI Taxonomy" id="121331"/>
    <lineage>
        <taxon>Eukaryota</taxon>
        <taxon>Metazoa</taxon>
        <taxon>Chordata</taxon>
        <taxon>Craniata</taxon>
        <taxon>Vertebrata</taxon>
        <taxon>Euteleostomi</taxon>
        <taxon>Lepidosauria</taxon>
        <taxon>Squamata</taxon>
        <taxon>Bifurcata</taxon>
        <taxon>Unidentata</taxon>
        <taxon>Episquamata</taxon>
        <taxon>Toxicofera</taxon>
        <taxon>Serpentes</taxon>
        <taxon>Colubroidea</taxon>
        <taxon>Dipsadidae</taxon>
        <taxon>Helicops</taxon>
    </lineage>
</organism>
<name>CRVP_HELAG</name>